<gene>
    <name evidence="1" type="primary">gatB</name>
    <name type="ordered locus">STER_1590</name>
</gene>
<sequence>MNFETVIGLEVHVELNTNSKIFSPTSAHFGNEQNTNTNVIDWSFPGVLPVLNKGVVDAGIKAALALNMDIHQHMHFDRKNYFYPDNPKAYQISQFDEPIGYNGWIEVQLEDGTTKKIGIERAHLEEDAGKNTHGTDGFSYVDLNRQGVPLIEIVSEADMRSPEEAYAYLTALKEVIQYTGISDVKMEEGSMRVDANISLRPYGQEEFGTKTELKNLNSFSNVRKGLEYEVQRQAKILRSGGVIRQETRRYDEASKSTILMRVKEGAADYRYFPEPDLPLFEISDEWIEEMRTELPEFPKDRRARYVAELGLSDYDANQLTATKVTSDFFEAAVALGGDAKQVSNWLQGEVAQFLNAEGKTLEEIQLTPENLVEMIAIIEDGTISSKIAKKVFVHLAKNGGGAREYVEKAGLVQISDPEVLIPIIHQVFADNEAAIADFKSGKRNADKAFTGFLMKATKGQANPQVALKLLAQELAKLKED</sequence>
<evidence type="ECO:0000255" key="1">
    <source>
        <dbReference type="HAMAP-Rule" id="MF_00121"/>
    </source>
</evidence>
<proteinExistence type="inferred from homology"/>
<name>GATB_STRTD</name>
<protein>
    <recommendedName>
        <fullName evidence="1">Aspartyl/glutamyl-tRNA(Asn/Gln) amidotransferase subunit B</fullName>
        <shortName evidence="1">Asp/Glu-ADT subunit B</shortName>
        <ecNumber evidence="1">6.3.5.-</ecNumber>
    </recommendedName>
</protein>
<feature type="chain" id="PRO_1000016052" description="Aspartyl/glutamyl-tRNA(Asn/Gln) amidotransferase subunit B">
    <location>
        <begin position="1"/>
        <end position="480"/>
    </location>
</feature>
<comment type="function">
    <text evidence="1">Allows the formation of correctly charged Asn-tRNA(Asn) or Gln-tRNA(Gln) through the transamidation of misacylated Asp-tRNA(Asn) or Glu-tRNA(Gln) in organisms which lack either or both of asparaginyl-tRNA or glutaminyl-tRNA synthetases. The reaction takes place in the presence of glutamine and ATP through an activated phospho-Asp-tRNA(Asn) or phospho-Glu-tRNA(Gln).</text>
</comment>
<comment type="catalytic activity">
    <reaction evidence="1">
        <text>L-glutamyl-tRNA(Gln) + L-glutamine + ATP + H2O = L-glutaminyl-tRNA(Gln) + L-glutamate + ADP + phosphate + H(+)</text>
        <dbReference type="Rhea" id="RHEA:17521"/>
        <dbReference type="Rhea" id="RHEA-COMP:9681"/>
        <dbReference type="Rhea" id="RHEA-COMP:9684"/>
        <dbReference type="ChEBI" id="CHEBI:15377"/>
        <dbReference type="ChEBI" id="CHEBI:15378"/>
        <dbReference type="ChEBI" id="CHEBI:29985"/>
        <dbReference type="ChEBI" id="CHEBI:30616"/>
        <dbReference type="ChEBI" id="CHEBI:43474"/>
        <dbReference type="ChEBI" id="CHEBI:58359"/>
        <dbReference type="ChEBI" id="CHEBI:78520"/>
        <dbReference type="ChEBI" id="CHEBI:78521"/>
        <dbReference type="ChEBI" id="CHEBI:456216"/>
    </reaction>
</comment>
<comment type="catalytic activity">
    <reaction evidence="1">
        <text>L-aspartyl-tRNA(Asn) + L-glutamine + ATP + H2O = L-asparaginyl-tRNA(Asn) + L-glutamate + ADP + phosphate + 2 H(+)</text>
        <dbReference type="Rhea" id="RHEA:14513"/>
        <dbReference type="Rhea" id="RHEA-COMP:9674"/>
        <dbReference type="Rhea" id="RHEA-COMP:9677"/>
        <dbReference type="ChEBI" id="CHEBI:15377"/>
        <dbReference type="ChEBI" id="CHEBI:15378"/>
        <dbReference type="ChEBI" id="CHEBI:29985"/>
        <dbReference type="ChEBI" id="CHEBI:30616"/>
        <dbReference type="ChEBI" id="CHEBI:43474"/>
        <dbReference type="ChEBI" id="CHEBI:58359"/>
        <dbReference type="ChEBI" id="CHEBI:78515"/>
        <dbReference type="ChEBI" id="CHEBI:78516"/>
        <dbReference type="ChEBI" id="CHEBI:456216"/>
    </reaction>
</comment>
<comment type="subunit">
    <text evidence="1">Heterotrimer of A, B and C subunits.</text>
</comment>
<comment type="similarity">
    <text evidence="1">Belongs to the GatB/GatE family. GatB subfamily.</text>
</comment>
<accession>Q03J82</accession>
<organism>
    <name type="scientific">Streptococcus thermophilus (strain ATCC BAA-491 / LMD-9)</name>
    <dbReference type="NCBI Taxonomy" id="322159"/>
    <lineage>
        <taxon>Bacteria</taxon>
        <taxon>Bacillati</taxon>
        <taxon>Bacillota</taxon>
        <taxon>Bacilli</taxon>
        <taxon>Lactobacillales</taxon>
        <taxon>Streptococcaceae</taxon>
        <taxon>Streptococcus</taxon>
    </lineage>
</organism>
<reference key="1">
    <citation type="journal article" date="2006" name="Proc. Natl. Acad. Sci. U.S.A.">
        <title>Comparative genomics of the lactic acid bacteria.</title>
        <authorList>
            <person name="Makarova K.S."/>
            <person name="Slesarev A."/>
            <person name="Wolf Y.I."/>
            <person name="Sorokin A."/>
            <person name="Mirkin B."/>
            <person name="Koonin E.V."/>
            <person name="Pavlov A."/>
            <person name="Pavlova N."/>
            <person name="Karamychev V."/>
            <person name="Polouchine N."/>
            <person name="Shakhova V."/>
            <person name="Grigoriev I."/>
            <person name="Lou Y."/>
            <person name="Rohksar D."/>
            <person name="Lucas S."/>
            <person name="Huang K."/>
            <person name="Goodstein D.M."/>
            <person name="Hawkins T."/>
            <person name="Plengvidhya V."/>
            <person name="Welker D."/>
            <person name="Hughes J."/>
            <person name="Goh Y."/>
            <person name="Benson A."/>
            <person name="Baldwin K."/>
            <person name="Lee J.-H."/>
            <person name="Diaz-Muniz I."/>
            <person name="Dosti B."/>
            <person name="Smeianov V."/>
            <person name="Wechter W."/>
            <person name="Barabote R."/>
            <person name="Lorca G."/>
            <person name="Altermann E."/>
            <person name="Barrangou R."/>
            <person name="Ganesan B."/>
            <person name="Xie Y."/>
            <person name="Rawsthorne H."/>
            <person name="Tamir D."/>
            <person name="Parker C."/>
            <person name="Breidt F."/>
            <person name="Broadbent J.R."/>
            <person name="Hutkins R."/>
            <person name="O'Sullivan D."/>
            <person name="Steele J."/>
            <person name="Unlu G."/>
            <person name="Saier M.H. Jr."/>
            <person name="Klaenhammer T."/>
            <person name="Richardson P."/>
            <person name="Kozyavkin S."/>
            <person name="Weimer B.C."/>
            <person name="Mills D.A."/>
        </authorList>
    </citation>
    <scope>NUCLEOTIDE SEQUENCE [LARGE SCALE GENOMIC DNA]</scope>
    <source>
        <strain>ATCC BAA-491 / LMD-9</strain>
    </source>
</reference>
<keyword id="KW-0067">ATP-binding</keyword>
<keyword id="KW-0436">Ligase</keyword>
<keyword id="KW-0547">Nucleotide-binding</keyword>
<keyword id="KW-0648">Protein biosynthesis</keyword>
<dbReference type="EC" id="6.3.5.-" evidence="1"/>
<dbReference type="EMBL" id="CP000419">
    <property type="protein sequence ID" value="ABJ66740.1"/>
    <property type="molecule type" value="Genomic_DNA"/>
</dbReference>
<dbReference type="RefSeq" id="WP_011681541.1">
    <property type="nucleotide sequence ID" value="NC_008532.1"/>
</dbReference>
<dbReference type="SMR" id="Q03J82"/>
<dbReference type="KEGG" id="ste:STER_1590"/>
<dbReference type="HOGENOM" id="CLU_019240_0_0_9"/>
<dbReference type="GO" id="GO:0050566">
    <property type="term" value="F:asparaginyl-tRNA synthase (glutamine-hydrolyzing) activity"/>
    <property type="evidence" value="ECO:0007669"/>
    <property type="project" value="RHEA"/>
</dbReference>
<dbReference type="GO" id="GO:0005524">
    <property type="term" value="F:ATP binding"/>
    <property type="evidence" value="ECO:0007669"/>
    <property type="project" value="UniProtKB-KW"/>
</dbReference>
<dbReference type="GO" id="GO:0050567">
    <property type="term" value="F:glutaminyl-tRNA synthase (glutamine-hydrolyzing) activity"/>
    <property type="evidence" value="ECO:0007669"/>
    <property type="project" value="UniProtKB-UniRule"/>
</dbReference>
<dbReference type="GO" id="GO:0070681">
    <property type="term" value="P:glutaminyl-tRNAGln biosynthesis via transamidation"/>
    <property type="evidence" value="ECO:0007669"/>
    <property type="project" value="TreeGrafter"/>
</dbReference>
<dbReference type="GO" id="GO:0006412">
    <property type="term" value="P:translation"/>
    <property type="evidence" value="ECO:0007669"/>
    <property type="project" value="UniProtKB-UniRule"/>
</dbReference>
<dbReference type="FunFam" id="1.10.10.410:FF:000001">
    <property type="entry name" value="Aspartyl/glutamyl-tRNA(Asn/Gln) amidotransferase subunit B"/>
    <property type="match status" value="1"/>
</dbReference>
<dbReference type="FunFam" id="1.10.150.380:FF:000001">
    <property type="entry name" value="Aspartyl/glutamyl-tRNA(Asn/Gln) amidotransferase subunit B"/>
    <property type="match status" value="1"/>
</dbReference>
<dbReference type="Gene3D" id="1.10.10.410">
    <property type="match status" value="1"/>
</dbReference>
<dbReference type="Gene3D" id="1.10.150.380">
    <property type="entry name" value="GatB domain, N-terminal subdomain"/>
    <property type="match status" value="1"/>
</dbReference>
<dbReference type="HAMAP" id="MF_00121">
    <property type="entry name" value="GatB"/>
    <property type="match status" value="1"/>
</dbReference>
<dbReference type="InterPro" id="IPR017959">
    <property type="entry name" value="Asn/Gln-tRNA_amidoTrfase_suB/E"/>
</dbReference>
<dbReference type="InterPro" id="IPR006075">
    <property type="entry name" value="Asn/Gln-tRNA_Trfase_suB/E_cat"/>
</dbReference>
<dbReference type="InterPro" id="IPR018027">
    <property type="entry name" value="Asn/Gln_amidotransferase"/>
</dbReference>
<dbReference type="InterPro" id="IPR003789">
    <property type="entry name" value="Asn/Gln_tRNA_amidoTrase-B-like"/>
</dbReference>
<dbReference type="InterPro" id="IPR004413">
    <property type="entry name" value="GatB"/>
</dbReference>
<dbReference type="InterPro" id="IPR042114">
    <property type="entry name" value="GatB_C_1"/>
</dbReference>
<dbReference type="InterPro" id="IPR023168">
    <property type="entry name" value="GatB_Yqey_C_2"/>
</dbReference>
<dbReference type="InterPro" id="IPR017958">
    <property type="entry name" value="Gln-tRNA_amidoTrfase_suB_CS"/>
</dbReference>
<dbReference type="InterPro" id="IPR014746">
    <property type="entry name" value="Gln_synth/guanido_kin_cat_dom"/>
</dbReference>
<dbReference type="NCBIfam" id="TIGR00133">
    <property type="entry name" value="gatB"/>
    <property type="match status" value="1"/>
</dbReference>
<dbReference type="NCBIfam" id="NF004011">
    <property type="entry name" value="PRK05477.1-1"/>
    <property type="match status" value="1"/>
</dbReference>
<dbReference type="NCBIfam" id="NF004012">
    <property type="entry name" value="PRK05477.1-2"/>
    <property type="match status" value="1"/>
</dbReference>
<dbReference type="NCBIfam" id="NF004014">
    <property type="entry name" value="PRK05477.1-4"/>
    <property type="match status" value="1"/>
</dbReference>
<dbReference type="PANTHER" id="PTHR11659">
    <property type="entry name" value="GLUTAMYL-TRNA GLN AMIDOTRANSFERASE SUBUNIT B MITOCHONDRIAL AND PROKARYOTIC PET112-RELATED"/>
    <property type="match status" value="1"/>
</dbReference>
<dbReference type="PANTHER" id="PTHR11659:SF0">
    <property type="entry name" value="GLUTAMYL-TRNA(GLN) AMIDOTRANSFERASE SUBUNIT B, MITOCHONDRIAL"/>
    <property type="match status" value="1"/>
</dbReference>
<dbReference type="Pfam" id="PF02934">
    <property type="entry name" value="GatB_N"/>
    <property type="match status" value="1"/>
</dbReference>
<dbReference type="Pfam" id="PF02637">
    <property type="entry name" value="GatB_Yqey"/>
    <property type="match status" value="1"/>
</dbReference>
<dbReference type="SMART" id="SM00845">
    <property type="entry name" value="GatB_Yqey"/>
    <property type="match status" value="1"/>
</dbReference>
<dbReference type="SUPFAM" id="SSF89095">
    <property type="entry name" value="GatB/YqeY motif"/>
    <property type="match status" value="1"/>
</dbReference>
<dbReference type="SUPFAM" id="SSF55931">
    <property type="entry name" value="Glutamine synthetase/guanido kinase"/>
    <property type="match status" value="1"/>
</dbReference>
<dbReference type="PROSITE" id="PS01234">
    <property type="entry name" value="GATB"/>
    <property type="match status" value="1"/>
</dbReference>